<protein>
    <recommendedName>
        <fullName evidence="1">Ribonuclease H</fullName>
        <shortName evidence="1">RNase H</shortName>
        <ecNumber evidence="1">3.1.26.4</ecNumber>
    </recommendedName>
</protein>
<proteinExistence type="inferred from homology"/>
<organism>
    <name type="scientific">Novosphingobium aromaticivorans (strain ATCC 700278 / DSM 12444 / CCUG 56034 / CIP 105152 / NBRC 16084 / F199)</name>
    <dbReference type="NCBI Taxonomy" id="279238"/>
    <lineage>
        <taxon>Bacteria</taxon>
        <taxon>Pseudomonadati</taxon>
        <taxon>Pseudomonadota</taxon>
        <taxon>Alphaproteobacteria</taxon>
        <taxon>Sphingomonadales</taxon>
        <taxon>Sphingomonadaceae</taxon>
        <taxon>Novosphingobium</taxon>
    </lineage>
</organism>
<gene>
    <name evidence="1" type="primary">rnhA</name>
    <name type="ordered locus">Saro_1085</name>
</gene>
<keyword id="KW-0963">Cytoplasm</keyword>
<keyword id="KW-0255">Endonuclease</keyword>
<keyword id="KW-0378">Hydrolase</keyword>
<keyword id="KW-0460">Magnesium</keyword>
<keyword id="KW-0479">Metal-binding</keyword>
<keyword id="KW-0540">Nuclease</keyword>
<keyword id="KW-1185">Reference proteome</keyword>
<reference key="1">
    <citation type="submission" date="2006-01" db="EMBL/GenBank/DDBJ databases">
        <title>Complete sequence of Novosphingobium aromaticivorans DSM 12444.</title>
        <authorList>
            <consortium name="US DOE Joint Genome Institute"/>
            <person name="Copeland A."/>
            <person name="Lucas S."/>
            <person name="Lapidus A."/>
            <person name="Barry K."/>
            <person name="Detter J.C."/>
            <person name="Glavina T."/>
            <person name="Hammon N."/>
            <person name="Israni S."/>
            <person name="Pitluck S."/>
            <person name="Chain P."/>
            <person name="Malfatti S."/>
            <person name="Shin M."/>
            <person name="Vergez L."/>
            <person name="Schmutz J."/>
            <person name="Larimer F."/>
            <person name="Land M."/>
            <person name="Kyrpides N."/>
            <person name="Ivanova N."/>
            <person name="Fredrickson J."/>
            <person name="Balkwill D."/>
            <person name="Romine M.F."/>
            <person name="Richardson P."/>
        </authorList>
    </citation>
    <scope>NUCLEOTIDE SEQUENCE [LARGE SCALE GENOMIC DNA]</scope>
    <source>
        <strain>ATCC 700278 / DSM 12444 / CCUG 56034 / CIP 105152 / NBRC 16084 / F199</strain>
    </source>
</reference>
<name>RNH_NOVAD</name>
<dbReference type="EC" id="3.1.26.4" evidence="1"/>
<dbReference type="EMBL" id="CP000248">
    <property type="protein sequence ID" value="ABD25530.1"/>
    <property type="molecule type" value="Genomic_DNA"/>
</dbReference>
<dbReference type="RefSeq" id="WP_011444744.1">
    <property type="nucleotide sequence ID" value="NC_007794.1"/>
</dbReference>
<dbReference type="SMR" id="Q2G9E3"/>
<dbReference type="STRING" id="279238.Saro_1085"/>
<dbReference type="KEGG" id="nar:Saro_1085"/>
<dbReference type="eggNOG" id="COG0328">
    <property type="taxonomic scope" value="Bacteria"/>
</dbReference>
<dbReference type="HOGENOM" id="CLU_030894_6_0_5"/>
<dbReference type="Proteomes" id="UP000009134">
    <property type="component" value="Chromosome"/>
</dbReference>
<dbReference type="GO" id="GO:0005737">
    <property type="term" value="C:cytoplasm"/>
    <property type="evidence" value="ECO:0007669"/>
    <property type="project" value="UniProtKB-SubCell"/>
</dbReference>
<dbReference type="GO" id="GO:0000287">
    <property type="term" value="F:magnesium ion binding"/>
    <property type="evidence" value="ECO:0007669"/>
    <property type="project" value="UniProtKB-UniRule"/>
</dbReference>
<dbReference type="GO" id="GO:0003676">
    <property type="term" value="F:nucleic acid binding"/>
    <property type="evidence" value="ECO:0007669"/>
    <property type="project" value="InterPro"/>
</dbReference>
<dbReference type="GO" id="GO:0004523">
    <property type="term" value="F:RNA-DNA hybrid ribonuclease activity"/>
    <property type="evidence" value="ECO:0007669"/>
    <property type="project" value="UniProtKB-UniRule"/>
</dbReference>
<dbReference type="GO" id="GO:0043137">
    <property type="term" value="P:DNA replication, removal of RNA primer"/>
    <property type="evidence" value="ECO:0007669"/>
    <property type="project" value="TreeGrafter"/>
</dbReference>
<dbReference type="CDD" id="cd09278">
    <property type="entry name" value="RNase_HI_prokaryote_like"/>
    <property type="match status" value="1"/>
</dbReference>
<dbReference type="FunFam" id="3.30.420.10:FF:000089">
    <property type="entry name" value="Ribonuclease H"/>
    <property type="match status" value="1"/>
</dbReference>
<dbReference type="Gene3D" id="3.30.420.10">
    <property type="entry name" value="Ribonuclease H-like superfamily/Ribonuclease H"/>
    <property type="match status" value="1"/>
</dbReference>
<dbReference type="HAMAP" id="MF_00042">
    <property type="entry name" value="RNase_H"/>
    <property type="match status" value="1"/>
</dbReference>
<dbReference type="InterPro" id="IPR050092">
    <property type="entry name" value="RNase_H"/>
</dbReference>
<dbReference type="InterPro" id="IPR012337">
    <property type="entry name" value="RNaseH-like_sf"/>
</dbReference>
<dbReference type="InterPro" id="IPR002156">
    <property type="entry name" value="RNaseH_domain"/>
</dbReference>
<dbReference type="InterPro" id="IPR036397">
    <property type="entry name" value="RNaseH_sf"/>
</dbReference>
<dbReference type="InterPro" id="IPR022892">
    <property type="entry name" value="RNaseHI"/>
</dbReference>
<dbReference type="NCBIfam" id="NF001236">
    <property type="entry name" value="PRK00203.1"/>
    <property type="match status" value="1"/>
</dbReference>
<dbReference type="PANTHER" id="PTHR10642">
    <property type="entry name" value="RIBONUCLEASE H1"/>
    <property type="match status" value="1"/>
</dbReference>
<dbReference type="PANTHER" id="PTHR10642:SF26">
    <property type="entry name" value="RIBONUCLEASE H1"/>
    <property type="match status" value="1"/>
</dbReference>
<dbReference type="Pfam" id="PF00075">
    <property type="entry name" value="RNase_H"/>
    <property type="match status" value="1"/>
</dbReference>
<dbReference type="SUPFAM" id="SSF53098">
    <property type="entry name" value="Ribonuclease H-like"/>
    <property type="match status" value="1"/>
</dbReference>
<dbReference type="PROSITE" id="PS50879">
    <property type="entry name" value="RNASE_H_1"/>
    <property type="match status" value="1"/>
</dbReference>
<accession>Q2G9E3</accession>
<sequence>MKHVEIFTDGACKGNPGKGGWGALLRMGEHEKEMAGSEKETTNNRMELMAAIRALEALKQPCRVTLHTDSKYVLDGITKWIFGWQKKGWKTADNKPVKNEDLWRALVDAVRPHKVEWVWVKGHDGHPENERVDKLASDAALAA</sequence>
<comment type="function">
    <text evidence="1">Endonuclease that specifically degrades the RNA of RNA-DNA hybrids.</text>
</comment>
<comment type="catalytic activity">
    <reaction evidence="1">
        <text>Endonucleolytic cleavage to 5'-phosphomonoester.</text>
        <dbReference type="EC" id="3.1.26.4"/>
    </reaction>
</comment>
<comment type="cofactor">
    <cofactor evidence="1">
        <name>Mg(2+)</name>
        <dbReference type="ChEBI" id="CHEBI:18420"/>
    </cofactor>
    <text evidence="1">Binds 1 Mg(2+) ion per subunit. May bind a second metal ion at a regulatory site, or after substrate binding.</text>
</comment>
<comment type="subunit">
    <text evidence="1">Monomer.</text>
</comment>
<comment type="subcellular location">
    <subcellularLocation>
        <location evidence="1">Cytoplasm</location>
    </subcellularLocation>
</comment>
<comment type="similarity">
    <text evidence="1">Belongs to the RNase H family.</text>
</comment>
<feature type="chain" id="PRO_0000332638" description="Ribonuclease H">
    <location>
        <begin position="1"/>
        <end position="143"/>
    </location>
</feature>
<feature type="domain" description="RNase H type-1" evidence="2">
    <location>
        <begin position="1"/>
        <end position="141"/>
    </location>
</feature>
<feature type="binding site" evidence="1">
    <location>
        <position position="9"/>
    </location>
    <ligand>
        <name>Mg(2+)</name>
        <dbReference type="ChEBI" id="CHEBI:18420"/>
        <label>1</label>
    </ligand>
</feature>
<feature type="binding site" evidence="1">
    <location>
        <position position="9"/>
    </location>
    <ligand>
        <name>Mg(2+)</name>
        <dbReference type="ChEBI" id="CHEBI:18420"/>
        <label>2</label>
    </ligand>
</feature>
<feature type="binding site" evidence="1">
    <location>
        <position position="47"/>
    </location>
    <ligand>
        <name>Mg(2+)</name>
        <dbReference type="ChEBI" id="CHEBI:18420"/>
        <label>1</label>
    </ligand>
</feature>
<feature type="binding site" evidence="1">
    <location>
        <position position="69"/>
    </location>
    <ligand>
        <name>Mg(2+)</name>
        <dbReference type="ChEBI" id="CHEBI:18420"/>
        <label>1</label>
    </ligand>
</feature>
<feature type="binding site" evidence="1">
    <location>
        <position position="133"/>
    </location>
    <ligand>
        <name>Mg(2+)</name>
        <dbReference type="ChEBI" id="CHEBI:18420"/>
        <label>2</label>
    </ligand>
</feature>
<evidence type="ECO:0000255" key="1">
    <source>
        <dbReference type="HAMAP-Rule" id="MF_00042"/>
    </source>
</evidence>
<evidence type="ECO:0000255" key="2">
    <source>
        <dbReference type="PROSITE-ProRule" id="PRU00408"/>
    </source>
</evidence>